<sequence>MNLQHHFLIAMPALQDPIFRRSVVYICEHNTNGAMGIIVNKPLENLKIEGILEKLKITPEPRDESIRLDKPVMLGGPLAEDRGFILHTPPSNFASSIRISDNTVMTTSRDVLETLGTDKQPSDVLVALGYASWEKGQLEQEILDNAWLTAPADLNILFKTPIADRWRDAAKLIGVDILTMPGVAGHA</sequence>
<gene>
    <name evidence="1" type="primary">yqgE</name>
    <name type="ordered locus">E2348C_3201</name>
</gene>
<keyword id="KW-1185">Reference proteome</keyword>
<accession>B7UHZ5</accession>
<proteinExistence type="inferred from homology"/>
<dbReference type="EMBL" id="FM180568">
    <property type="protein sequence ID" value="CAS10749.1"/>
    <property type="molecule type" value="Genomic_DNA"/>
</dbReference>
<dbReference type="RefSeq" id="WP_001339287.1">
    <property type="nucleotide sequence ID" value="NC_011601.1"/>
</dbReference>
<dbReference type="SMR" id="B7UHZ5"/>
<dbReference type="KEGG" id="ecg:E2348C_3201"/>
<dbReference type="HOGENOM" id="CLU_057596_1_0_6"/>
<dbReference type="Proteomes" id="UP000008205">
    <property type="component" value="Chromosome"/>
</dbReference>
<dbReference type="GO" id="GO:0005829">
    <property type="term" value="C:cytosol"/>
    <property type="evidence" value="ECO:0007669"/>
    <property type="project" value="TreeGrafter"/>
</dbReference>
<dbReference type="FunFam" id="3.30.70.1300:FF:000001">
    <property type="entry name" value="UPF0301 protein YqgE"/>
    <property type="match status" value="1"/>
</dbReference>
<dbReference type="Gene3D" id="3.40.1740.10">
    <property type="entry name" value="VC0467-like"/>
    <property type="match status" value="1"/>
</dbReference>
<dbReference type="Gene3D" id="3.30.70.1300">
    <property type="entry name" value="VC0467-like domains"/>
    <property type="match status" value="1"/>
</dbReference>
<dbReference type="HAMAP" id="MF_00758">
    <property type="entry name" value="UPF0301"/>
    <property type="match status" value="1"/>
</dbReference>
<dbReference type="InterPro" id="IPR003774">
    <property type="entry name" value="AlgH-like"/>
</dbReference>
<dbReference type="NCBIfam" id="NF001266">
    <property type="entry name" value="PRK00228.1-1"/>
    <property type="match status" value="1"/>
</dbReference>
<dbReference type="PANTHER" id="PTHR30327">
    <property type="entry name" value="UNCHARACTERIZED PROTEIN YQGE"/>
    <property type="match status" value="1"/>
</dbReference>
<dbReference type="PANTHER" id="PTHR30327:SF1">
    <property type="entry name" value="UPF0301 PROTEIN YQGE"/>
    <property type="match status" value="1"/>
</dbReference>
<dbReference type="Pfam" id="PF02622">
    <property type="entry name" value="DUF179"/>
    <property type="match status" value="1"/>
</dbReference>
<dbReference type="SUPFAM" id="SSF143456">
    <property type="entry name" value="VC0467-like"/>
    <property type="match status" value="1"/>
</dbReference>
<comment type="similarity">
    <text evidence="1">Belongs to the UPF0301 (AlgH) family.</text>
</comment>
<organism>
    <name type="scientific">Escherichia coli O127:H6 (strain E2348/69 / EPEC)</name>
    <dbReference type="NCBI Taxonomy" id="574521"/>
    <lineage>
        <taxon>Bacteria</taxon>
        <taxon>Pseudomonadati</taxon>
        <taxon>Pseudomonadota</taxon>
        <taxon>Gammaproteobacteria</taxon>
        <taxon>Enterobacterales</taxon>
        <taxon>Enterobacteriaceae</taxon>
        <taxon>Escherichia</taxon>
    </lineage>
</organism>
<evidence type="ECO:0000255" key="1">
    <source>
        <dbReference type="HAMAP-Rule" id="MF_00758"/>
    </source>
</evidence>
<protein>
    <recommendedName>
        <fullName evidence="1">UPF0301 protein YqgE</fullName>
    </recommendedName>
</protein>
<feature type="chain" id="PRO_1000148381" description="UPF0301 protein YqgE">
    <location>
        <begin position="1"/>
        <end position="187"/>
    </location>
</feature>
<reference key="1">
    <citation type="journal article" date="2009" name="J. Bacteriol.">
        <title>Complete genome sequence and comparative genome analysis of enteropathogenic Escherichia coli O127:H6 strain E2348/69.</title>
        <authorList>
            <person name="Iguchi A."/>
            <person name="Thomson N.R."/>
            <person name="Ogura Y."/>
            <person name="Saunders D."/>
            <person name="Ooka T."/>
            <person name="Henderson I.R."/>
            <person name="Harris D."/>
            <person name="Asadulghani M."/>
            <person name="Kurokawa K."/>
            <person name="Dean P."/>
            <person name="Kenny B."/>
            <person name="Quail M.A."/>
            <person name="Thurston S."/>
            <person name="Dougan G."/>
            <person name="Hayashi T."/>
            <person name="Parkhill J."/>
            <person name="Frankel G."/>
        </authorList>
    </citation>
    <scope>NUCLEOTIDE SEQUENCE [LARGE SCALE GENOMIC DNA]</scope>
    <source>
        <strain>E2348/69 / EPEC</strain>
    </source>
</reference>
<name>YQGE_ECO27</name>